<evidence type="ECO:0000255" key="1">
    <source>
        <dbReference type="HAMAP-Rule" id="MF_00001"/>
    </source>
</evidence>
<name>PYRB_CORJK</name>
<organism>
    <name type="scientific">Corynebacterium jeikeium (strain K411)</name>
    <dbReference type="NCBI Taxonomy" id="306537"/>
    <lineage>
        <taxon>Bacteria</taxon>
        <taxon>Bacillati</taxon>
        <taxon>Actinomycetota</taxon>
        <taxon>Actinomycetes</taxon>
        <taxon>Mycobacteriales</taxon>
        <taxon>Corynebacteriaceae</taxon>
        <taxon>Corynebacterium</taxon>
    </lineage>
</organism>
<protein>
    <recommendedName>
        <fullName evidence="1">Aspartate carbamoyltransferase catalytic subunit</fullName>
        <ecNumber evidence="1">2.1.3.2</ecNumber>
    </recommendedName>
    <alternativeName>
        <fullName evidence="1">Aspartate transcarbamylase</fullName>
        <shortName evidence="1">ATCase</shortName>
    </alternativeName>
</protein>
<comment type="function">
    <text evidence="1">Catalyzes the condensation of carbamoyl phosphate and aspartate to form carbamoyl aspartate and inorganic phosphate, the committed step in the de novo pyrimidine nucleotide biosynthesis pathway.</text>
</comment>
<comment type="catalytic activity">
    <reaction evidence="1">
        <text>carbamoyl phosphate + L-aspartate = N-carbamoyl-L-aspartate + phosphate + H(+)</text>
        <dbReference type="Rhea" id="RHEA:20013"/>
        <dbReference type="ChEBI" id="CHEBI:15378"/>
        <dbReference type="ChEBI" id="CHEBI:29991"/>
        <dbReference type="ChEBI" id="CHEBI:32814"/>
        <dbReference type="ChEBI" id="CHEBI:43474"/>
        <dbReference type="ChEBI" id="CHEBI:58228"/>
        <dbReference type="EC" id="2.1.3.2"/>
    </reaction>
</comment>
<comment type="pathway">
    <text evidence="1">Pyrimidine metabolism; UMP biosynthesis via de novo pathway; (S)-dihydroorotate from bicarbonate: step 2/3.</text>
</comment>
<comment type="subunit">
    <text evidence="1">Heterododecamer (2C3:3R2) of six catalytic PyrB chains organized as two trimers (C3), and six regulatory PyrI chains organized as three dimers (R2).</text>
</comment>
<comment type="similarity">
    <text evidence="1">Belongs to the aspartate/ornithine carbamoyltransferase superfamily. ATCase family.</text>
</comment>
<accession>Q4JVG8</accession>
<dbReference type="EC" id="2.1.3.2" evidence="1"/>
<dbReference type="EMBL" id="CR931997">
    <property type="protein sequence ID" value="CAI37189.1"/>
    <property type="molecule type" value="Genomic_DNA"/>
</dbReference>
<dbReference type="RefSeq" id="WP_011273596.1">
    <property type="nucleotide sequence ID" value="NC_007164.1"/>
</dbReference>
<dbReference type="SMR" id="Q4JVG8"/>
<dbReference type="STRING" id="306537.jk1025"/>
<dbReference type="KEGG" id="cjk:jk1025"/>
<dbReference type="PATRIC" id="fig|306537.10.peg.1037"/>
<dbReference type="eggNOG" id="COG0540">
    <property type="taxonomic scope" value="Bacteria"/>
</dbReference>
<dbReference type="HOGENOM" id="CLU_043846_2_0_11"/>
<dbReference type="OrthoDB" id="9774690at2"/>
<dbReference type="UniPathway" id="UPA00070">
    <property type="reaction ID" value="UER00116"/>
</dbReference>
<dbReference type="Proteomes" id="UP000000545">
    <property type="component" value="Chromosome"/>
</dbReference>
<dbReference type="GO" id="GO:0005829">
    <property type="term" value="C:cytosol"/>
    <property type="evidence" value="ECO:0007669"/>
    <property type="project" value="TreeGrafter"/>
</dbReference>
<dbReference type="GO" id="GO:0016597">
    <property type="term" value="F:amino acid binding"/>
    <property type="evidence" value="ECO:0007669"/>
    <property type="project" value="InterPro"/>
</dbReference>
<dbReference type="GO" id="GO:0004070">
    <property type="term" value="F:aspartate carbamoyltransferase activity"/>
    <property type="evidence" value="ECO:0007669"/>
    <property type="project" value="UniProtKB-UniRule"/>
</dbReference>
<dbReference type="GO" id="GO:0006207">
    <property type="term" value="P:'de novo' pyrimidine nucleobase biosynthetic process"/>
    <property type="evidence" value="ECO:0007669"/>
    <property type="project" value="InterPro"/>
</dbReference>
<dbReference type="GO" id="GO:0044205">
    <property type="term" value="P:'de novo' UMP biosynthetic process"/>
    <property type="evidence" value="ECO:0007669"/>
    <property type="project" value="UniProtKB-UniRule"/>
</dbReference>
<dbReference type="GO" id="GO:0006520">
    <property type="term" value="P:amino acid metabolic process"/>
    <property type="evidence" value="ECO:0007669"/>
    <property type="project" value="InterPro"/>
</dbReference>
<dbReference type="FunFam" id="3.40.50.1370:FF:000007">
    <property type="entry name" value="Aspartate carbamoyltransferase"/>
    <property type="match status" value="1"/>
</dbReference>
<dbReference type="Gene3D" id="3.40.50.1370">
    <property type="entry name" value="Aspartate/ornithine carbamoyltransferase"/>
    <property type="match status" value="2"/>
</dbReference>
<dbReference type="HAMAP" id="MF_00001">
    <property type="entry name" value="Asp_carb_tr"/>
    <property type="match status" value="1"/>
</dbReference>
<dbReference type="InterPro" id="IPR006132">
    <property type="entry name" value="Asp/Orn_carbamoyltranf_P-bd"/>
</dbReference>
<dbReference type="InterPro" id="IPR006130">
    <property type="entry name" value="Asp/Orn_carbamoylTrfase"/>
</dbReference>
<dbReference type="InterPro" id="IPR036901">
    <property type="entry name" value="Asp/Orn_carbamoylTrfase_sf"/>
</dbReference>
<dbReference type="InterPro" id="IPR002082">
    <property type="entry name" value="Asp_carbamoyltransf"/>
</dbReference>
<dbReference type="InterPro" id="IPR006131">
    <property type="entry name" value="Asp_carbamoyltransf_Asp/Orn-bd"/>
</dbReference>
<dbReference type="NCBIfam" id="TIGR00670">
    <property type="entry name" value="asp_carb_tr"/>
    <property type="match status" value="1"/>
</dbReference>
<dbReference type="NCBIfam" id="NF002032">
    <property type="entry name" value="PRK00856.1"/>
    <property type="match status" value="1"/>
</dbReference>
<dbReference type="PANTHER" id="PTHR45753:SF6">
    <property type="entry name" value="ASPARTATE CARBAMOYLTRANSFERASE"/>
    <property type="match status" value="1"/>
</dbReference>
<dbReference type="PANTHER" id="PTHR45753">
    <property type="entry name" value="ORNITHINE CARBAMOYLTRANSFERASE, MITOCHONDRIAL"/>
    <property type="match status" value="1"/>
</dbReference>
<dbReference type="Pfam" id="PF00185">
    <property type="entry name" value="OTCace"/>
    <property type="match status" value="1"/>
</dbReference>
<dbReference type="Pfam" id="PF02729">
    <property type="entry name" value="OTCace_N"/>
    <property type="match status" value="1"/>
</dbReference>
<dbReference type="PRINTS" id="PR00100">
    <property type="entry name" value="AOTCASE"/>
</dbReference>
<dbReference type="PRINTS" id="PR00101">
    <property type="entry name" value="ATCASE"/>
</dbReference>
<dbReference type="SUPFAM" id="SSF53671">
    <property type="entry name" value="Aspartate/ornithine carbamoyltransferase"/>
    <property type="match status" value="1"/>
</dbReference>
<dbReference type="PROSITE" id="PS00097">
    <property type="entry name" value="CARBAMOYLTRANSFERASE"/>
    <property type="match status" value="1"/>
</dbReference>
<keyword id="KW-0665">Pyrimidine biosynthesis</keyword>
<keyword id="KW-1185">Reference proteome</keyword>
<keyword id="KW-0808">Transferase</keyword>
<feature type="chain" id="PRO_0000301565" description="Aspartate carbamoyltransferase catalytic subunit">
    <location>
        <begin position="1"/>
        <end position="311"/>
    </location>
</feature>
<feature type="binding site" evidence="1">
    <location>
        <position position="55"/>
    </location>
    <ligand>
        <name>carbamoyl phosphate</name>
        <dbReference type="ChEBI" id="CHEBI:58228"/>
    </ligand>
</feature>
<feature type="binding site" evidence="1">
    <location>
        <position position="56"/>
    </location>
    <ligand>
        <name>carbamoyl phosphate</name>
        <dbReference type="ChEBI" id="CHEBI:58228"/>
    </ligand>
</feature>
<feature type="binding site" evidence="1">
    <location>
        <position position="83"/>
    </location>
    <ligand>
        <name>L-aspartate</name>
        <dbReference type="ChEBI" id="CHEBI:29991"/>
    </ligand>
</feature>
<feature type="binding site" evidence="1">
    <location>
        <position position="105"/>
    </location>
    <ligand>
        <name>carbamoyl phosphate</name>
        <dbReference type="ChEBI" id="CHEBI:58228"/>
    </ligand>
</feature>
<feature type="binding site" evidence="1">
    <location>
        <position position="134"/>
    </location>
    <ligand>
        <name>carbamoyl phosphate</name>
        <dbReference type="ChEBI" id="CHEBI:58228"/>
    </ligand>
</feature>
<feature type="binding site" evidence="1">
    <location>
        <position position="137"/>
    </location>
    <ligand>
        <name>carbamoyl phosphate</name>
        <dbReference type="ChEBI" id="CHEBI:58228"/>
    </ligand>
</feature>
<feature type="binding site" evidence="1">
    <location>
        <position position="167"/>
    </location>
    <ligand>
        <name>L-aspartate</name>
        <dbReference type="ChEBI" id="CHEBI:29991"/>
    </ligand>
</feature>
<feature type="binding site" evidence="1">
    <location>
        <position position="226"/>
    </location>
    <ligand>
        <name>L-aspartate</name>
        <dbReference type="ChEBI" id="CHEBI:29991"/>
    </ligand>
</feature>
<feature type="binding site" evidence="1">
    <location>
        <position position="267"/>
    </location>
    <ligand>
        <name>carbamoyl phosphate</name>
        <dbReference type="ChEBI" id="CHEBI:58228"/>
    </ligand>
</feature>
<feature type="binding site" evidence="1">
    <location>
        <position position="268"/>
    </location>
    <ligand>
        <name>carbamoyl phosphate</name>
        <dbReference type="ChEBI" id="CHEBI:58228"/>
    </ligand>
</feature>
<reference key="1">
    <citation type="journal article" date="2005" name="J. Bacteriol.">
        <title>Complete genome sequence and analysis of the multiresistant nosocomial pathogen Corynebacterium jeikeium K411, a lipid-requiring bacterium of the human skin flora.</title>
        <authorList>
            <person name="Tauch A."/>
            <person name="Kaiser O."/>
            <person name="Hain T."/>
            <person name="Goesmann A."/>
            <person name="Weisshaar B."/>
            <person name="Albersmeier A."/>
            <person name="Bekel T."/>
            <person name="Bischoff N."/>
            <person name="Brune I."/>
            <person name="Chakraborty T."/>
            <person name="Kalinowski J."/>
            <person name="Meyer F."/>
            <person name="Rupp O."/>
            <person name="Schneiker S."/>
            <person name="Viehoever P."/>
            <person name="Puehler A."/>
        </authorList>
    </citation>
    <scope>NUCLEOTIDE SEQUENCE [LARGE SCALE GENOMIC DNA]</scope>
    <source>
        <strain>K411</strain>
    </source>
</reference>
<sequence>MKHLISIADLNKSEILGLMDEADRFAEALEGREMKKLPTLRGRTIFTLFYENSTRTRSSFETAGKWMSADVINISASSSSVKKGESLRDTALTLKAVGADAIIMRHPSSGAARQVAGWLDDTAIINAGDGSNQHPTQALLDATTMRNRIGEISGKKVVIVGDILHSRVARSNAQLLTTLGAEVVFVAPPTLVPLGIEHWGAEPDSVRVSYDFDSEIADADVVMMLRVQAERMHGGFFPSHREYATRYGLSQARAERMKEGAIIMHPGPMLRGMEINYDVADAPQTVVLNQVTAGVHVRMAVLFTLLVGEEG</sequence>
<proteinExistence type="inferred from homology"/>
<gene>
    <name evidence="1" type="primary">pyrB</name>
    <name type="ordered locus">jk1025</name>
</gene>